<proteinExistence type="inferred from homology"/>
<comment type="function">
    <text evidence="1">Methylates ribosomal protein L11.</text>
</comment>
<comment type="catalytic activity">
    <reaction evidence="1">
        <text>L-lysyl-[protein] + 3 S-adenosyl-L-methionine = N(6),N(6),N(6)-trimethyl-L-lysyl-[protein] + 3 S-adenosyl-L-homocysteine + 3 H(+)</text>
        <dbReference type="Rhea" id="RHEA:54192"/>
        <dbReference type="Rhea" id="RHEA-COMP:9752"/>
        <dbReference type="Rhea" id="RHEA-COMP:13826"/>
        <dbReference type="ChEBI" id="CHEBI:15378"/>
        <dbReference type="ChEBI" id="CHEBI:29969"/>
        <dbReference type="ChEBI" id="CHEBI:57856"/>
        <dbReference type="ChEBI" id="CHEBI:59789"/>
        <dbReference type="ChEBI" id="CHEBI:61961"/>
    </reaction>
</comment>
<comment type="subcellular location">
    <subcellularLocation>
        <location evidence="1">Cytoplasm</location>
    </subcellularLocation>
</comment>
<comment type="similarity">
    <text evidence="1">Belongs to the methyltransferase superfamily. PrmA family.</text>
</comment>
<organism>
    <name type="scientific">Rhizobium rhizogenes (strain K84 / ATCC BAA-868)</name>
    <name type="common">Agrobacterium radiobacter</name>
    <dbReference type="NCBI Taxonomy" id="311403"/>
    <lineage>
        <taxon>Bacteria</taxon>
        <taxon>Pseudomonadati</taxon>
        <taxon>Pseudomonadota</taxon>
        <taxon>Alphaproteobacteria</taxon>
        <taxon>Hyphomicrobiales</taxon>
        <taxon>Rhizobiaceae</taxon>
        <taxon>Rhizobium/Agrobacterium group</taxon>
        <taxon>Rhizobium</taxon>
    </lineage>
</organism>
<sequence>MSEIRLYVTTTEKKSEQVLDLMTPVFEDEELPIATSEIDEKSDIWEASIYLYADDEDDVRARFAALLKPAFPELVIKKEVIPDVDWIAKSLEGLKPVRAGRFLVHGSHDRDKIGSSDIAIEIDAGQAFGTGHHGTTAGCLETIETVLASRRVRNALDLGTGSGVLAIGVRKLRNIPVLATDIDPIAVRVARENVRRNGIASGIALETAPGFHSTAFSRHGPFDLIIANILARPLIKMAPQLVAHLAPGGSVILSGILAEQRWKVLAAYNGAKMRHVRTIWRNGWVTIHLDRP</sequence>
<dbReference type="EC" id="2.1.1.-" evidence="1"/>
<dbReference type="EMBL" id="CP000628">
    <property type="protein sequence ID" value="ACM27029.1"/>
    <property type="molecule type" value="Genomic_DNA"/>
</dbReference>
<dbReference type="RefSeq" id="WP_007697133.1">
    <property type="nucleotide sequence ID" value="NC_011985.1"/>
</dbReference>
<dbReference type="SMR" id="B9JH32"/>
<dbReference type="STRING" id="311403.Arad_2968"/>
<dbReference type="KEGG" id="ara:Arad_2968"/>
<dbReference type="eggNOG" id="COG2264">
    <property type="taxonomic scope" value="Bacteria"/>
</dbReference>
<dbReference type="HOGENOM" id="CLU_049382_3_0_5"/>
<dbReference type="Proteomes" id="UP000001600">
    <property type="component" value="Chromosome 1"/>
</dbReference>
<dbReference type="GO" id="GO:0005737">
    <property type="term" value="C:cytoplasm"/>
    <property type="evidence" value="ECO:0007669"/>
    <property type="project" value="UniProtKB-SubCell"/>
</dbReference>
<dbReference type="GO" id="GO:0016279">
    <property type="term" value="F:protein-lysine N-methyltransferase activity"/>
    <property type="evidence" value="ECO:0007669"/>
    <property type="project" value="RHEA"/>
</dbReference>
<dbReference type="GO" id="GO:0032259">
    <property type="term" value="P:methylation"/>
    <property type="evidence" value="ECO:0007669"/>
    <property type="project" value="UniProtKB-KW"/>
</dbReference>
<dbReference type="CDD" id="cd02440">
    <property type="entry name" value="AdoMet_MTases"/>
    <property type="match status" value="1"/>
</dbReference>
<dbReference type="Gene3D" id="3.40.50.150">
    <property type="entry name" value="Vaccinia Virus protein VP39"/>
    <property type="match status" value="1"/>
</dbReference>
<dbReference type="HAMAP" id="MF_00735">
    <property type="entry name" value="Methyltr_PrmA"/>
    <property type="match status" value="1"/>
</dbReference>
<dbReference type="InterPro" id="IPR050078">
    <property type="entry name" value="Ribosomal_L11_MeTrfase_PrmA"/>
</dbReference>
<dbReference type="InterPro" id="IPR004498">
    <property type="entry name" value="Ribosomal_PrmA_MeTrfase"/>
</dbReference>
<dbReference type="InterPro" id="IPR029063">
    <property type="entry name" value="SAM-dependent_MTases_sf"/>
</dbReference>
<dbReference type="NCBIfam" id="NF001784">
    <property type="entry name" value="PRK00517.2-1"/>
    <property type="match status" value="1"/>
</dbReference>
<dbReference type="PANTHER" id="PTHR43648">
    <property type="entry name" value="ELECTRON TRANSFER FLAVOPROTEIN BETA SUBUNIT LYSINE METHYLTRANSFERASE"/>
    <property type="match status" value="1"/>
</dbReference>
<dbReference type="PANTHER" id="PTHR43648:SF1">
    <property type="entry name" value="ELECTRON TRANSFER FLAVOPROTEIN BETA SUBUNIT LYSINE METHYLTRANSFERASE"/>
    <property type="match status" value="1"/>
</dbReference>
<dbReference type="Pfam" id="PF06325">
    <property type="entry name" value="PrmA"/>
    <property type="match status" value="1"/>
</dbReference>
<dbReference type="SUPFAM" id="SSF53335">
    <property type="entry name" value="S-adenosyl-L-methionine-dependent methyltransferases"/>
    <property type="match status" value="1"/>
</dbReference>
<name>PRMA_RHIR8</name>
<reference key="1">
    <citation type="journal article" date="2009" name="J. Bacteriol.">
        <title>Genome sequences of three Agrobacterium biovars help elucidate the evolution of multichromosome genomes in bacteria.</title>
        <authorList>
            <person name="Slater S.C."/>
            <person name="Goldman B.S."/>
            <person name="Goodner B."/>
            <person name="Setubal J.C."/>
            <person name="Farrand S.K."/>
            <person name="Nester E.W."/>
            <person name="Burr T.J."/>
            <person name="Banta L."/>
            <person name="Dickerman A.W."/>
            <person name="Paulsen I."/>
            <person name="Otten L."/>
            <person name="Suen G."/>
            <person name="Welch R."/>
            <person name="Almeida N.F."/>
            <person name="Arnold F."/>
            <person name="Burton O.T."/>
            <person name="Du Z."/>
            <person name="Ewing A."/>
            <person name="Godsy E."/>
            <person name="Heisel S."/>
            <person name="Houmiel K.L."/>
            <person name="Jhaveri J."/>
            <person name="Lu J."/>
            <person name="Miller N.M."/>
            <person name="Norton S."/>
            <person name="Chen Q."/>
            <person name="Phoolcharoen W."/>
            <person name="Ohlin V."/>
            <person name="Ondrusek D."/>
            <person name="Pride N."/>
            <person name="Stricklin S.L."/>
            <person name="Sun J."/>
            <person name="Wheeler C."/>
            <person name="Wilson L."/>
            <person name="Zhu H."/>
            <person name="Wood D.W."/>
        </authorList>
    </citation>
    <scope>NUCLEOTIDE SEQUENCE [LARGE SCALE GENOMIC DNA]</scope>
    <source>
        <strain>K84 / ATCC BAA-868</strain>
    </source>
</reference>
<gene>
    <name evidence="1" type="primary">prmA</name>
    <name type="ordered locus">Arad_2968</name>
</gene>
<feature type="chain" id="PRO_1000192570" description="Ribosomal protein L11 methyltransferase">
    <location>
        <begin position="1"/>
        <end position="292"/>
    </location>
</feature>
<feature type="binding site" evidence="1">
    <location>
        <position position="136"/>
    </location>
    <ligand>
        <name>S-adenosyl-L-methionine</name>
        <dbReference type="ChEBI" id="CHEBI:59789"/>
    </ligand>
</feature>
<feature type="binding site" evidence="1">
    <location>
        <position position="159"/>
    </location>
    <ligand>
        <name>S-adenosyl-L-methionine</name>
        <dbReference type="ChEBI" id="CHEBI:59789"/>
    </ligand>
</feature>
<feature type="binding site" evidence="1">
    <location>
        <position position="181"/>
    </location>
    <ligand>
        <name>S-adenosyl-L-methionine</name>
        <dbReference type="ChEBI" id="CHEBI:59789"/>
    </ligand>
</feature>
<feature type="binding site" evidence="1">
    <location>
        <position position="228"/>
    </location>
    <ligand>
        <name>S-adenosyl-L-methionine</name>
        <dbReference type="ChEBI" id="CHEBI:59789"/>
    </ligand>
</feature>
<keyword id="KW-0963">Cytoplasm</keyword>
<keyword id="KW-0489">Methyltransferase</keyword>
<keyword id="KW-0949">S-adenosyl-L-methionine</keyword>
<keyword id="KW-0808">Transferase</keyword>
<evidence type="ECO:0000255" key="1">
    <source>
        <dbReference type="HAMAP-Rule" id="MF_00735"/>
    </source>
</evidence>
<accession>B9JH32</accession>
<protein>
    <recommendedName>
        <fullName evidence="1">Ribosomal protein L11 methyltransferase</fullName>
        <shortName evidence="1">L11 Mtase</shortName>
        <ecNumber evidence="1">2.1.1.-</ecNumber>
    </recommendedName>
</protein>